<gene>
    <name type="primary">ATG14</name>
    <name type="synonym">APG14</name>
    <name type="synonym">CVT12</name>
    <name type="ORF">SCY_0342</name>
</gene>
<organism>
    <name type="scientific">Saccharomyces cerevisiae (strain YJM789)</name>
    <name type="common">Baker's yeast</name>
    <dbReference type="NCBI Taxonomy" id="307796"/>
    <lineage>
        <taxon>Eukaryota</taxon>
        <taxon>Fungi</taxon>
        <taxon>Dikarya</taxon>
        <taxon>Ascomycota</taxon>
        <taxon>Saccharomycotina</taxon>
        <taxon>Saccharomycetes</taxon>
        <taxon>Saccharomycetales</taxon>
        <taxon>Saccharomycetaceae</taxon>
        <taxon>Saccharomyces</taxon>
    </lineage>
</organism>
<comment type="function">
    <text evidence="1">Required for cytoplasm to vacuole transport (Cvt) and autophagy as a part of the autophagy-specific VPS34 PI3-kinase complex I. This complex is essential to recruit the ATG8-phosphatidylinositol conjugate and the ATG12-ATG5 conjugate to the pre-autophagosomal structure. ATG14 mediates the specific binding of the VPS34 PI3-kinase complex I to the preautophagosomal structure (PAS) (By similarity).</text>
</comment>
<comment type="subunit">
    <text evidence="1">Component of the autophagy-specific VPS34 PI3-kinase complex I composed of VPS15, VPS30, VPS34 and ATG14.</text>
</comment>
<comment type="subcellular location">
    <subcellularLocation>
        <location evidence="1">Preautophagosomal structure membrane</location>
        <topology evidence="1">Peripheral membrane protein</topology>
    </subcellularLocation>
    <subcellularLocation>
        <location evidence="1">Vacuole membrane</location>
        <topology evidence="1">Peripheral membrane protein</topology>
    </subcellularLocation>
    <text evidence="1">TRS85 is required for the recruitment of ATG14 to the PAS.</text>
</comment>
<comment type="domain">
    <text evidence="1">Coiled-Coils at the N-terminal half are essential for interaction with VPS30 and VPS34 and autophagy.</text>
</comment>
<comment type="similarity">
    <text evidence="3">Belongs to the ATG14 family.</text>
</comment>
<feature type="chain" id="PRO_0000317956" description="Autophagy-related protein 14">
    <location>
        <begin position="1"/>
        <end position="344"/>
    </location>
</feature>
<feature type="region of interest" description="Cysteine repeats" evidence="1">
    <location>
        <begin position="3"/>
        <end position="18"/>
    </location>
</feature>
<feature type="coiled-coil region" evidence="2">
    <location>
        <begin position="26"/>
        <end position="156"/>
    </location>
</feature>
<name>ATG14_YEAS7</name>
<dbReference type="EMBL" id="AAFW02000011">
    <property type="protein sequence ID" value="EDN64741.1"/>
    <property type="molecule type" value="Genomic_DNA"/>
</dbReference>
<dbReference type="SMR" id="A6ZL72"/>
<dbReference type="HOGENOM" id="CLU_069448_0_0_1"/>
<dbReference type="OrthoDB" id="40478at4893"/>
<dbReference type="Proteomes" id="UP000007060">
    <property type="component" value="Unassembled WGS sequence"/>
</dbReference>
<dbReference type="GO" id="GO:0034045">
    <property type="term" value="C:phagophore assembly site membrane"/>
    <property type="evidence" value="ECO:0007669"/>
    <property type="project" value="UniProtKB-SubCell"/>
</dbReference>
<dbReference type="GO" id="GO:0032991">
    <property type="term" value="C:protein-containing complex"/>
    <property type="evidence" value="ECO:0007669"/>
    <property type="project" value="UniProtKB-ARBA"/>
</dbReference>
<dbReference type="GO" id="GO:0005774">
    <property type="term" value="C:vacuolar membrane"/>
    <property type="evidence" value="ECO:0007669"/>
    <property type="project" value="UniProtKB-SubCell"/>
</dbReference>
<dbReference type="GO" id="GO:0016236">
    <property type="term" value="P:macroautophagy"/>
    <property type="evidence" value="ECO:0007669"/>
    <property type="project" value="InterPro"/>
</dbReference>
<dbReference type="GO" id="GO:0015031">
    <property type="term" value="P:protein transport"/>
    <property type="evidence" value="ECO:0007669"/>
    <property type="project" value="UniProtKB-KW"/>
</dbReference>
<dbReference type="InterPro" id="IPR023261">
    <property type="entry name" value="Autophagy-related_protein_14"/>
</dbReference>
<dbReference type="InterPro" id="IPR018791">
    <property type="entry name" value="UV_resistance/autophagy_Atg14"/>
</dbReference>
<dbReference type="Pfam" id="PF10186">
    <property type="entry name" value="ATG14"/>
    <property type="match status" value="1"/>
</dbReference>
<dbReference type="PRINTS" id="PR02030">
    <property type="entry name" value="AUTOPHGYRP14"/>
</dbReference>
<proteinExistence type="inferred from homology"/>
<evidence type="ECO:0000250" key="1"/>
<evidence type="ECO:0000255" key="2"/>
<evidence type="ECO:0000305" key="3"/>
<accession>A6ZL72</accession>
<sequence>MHCPICHHRAHVVYCAHCINTSPSLLLKLKLDLILLKDENKELNGKVEQILNEAMNYDQLDIKRMEKKKDPLMNSLMKLDVLRMKKNNNLIRHRIEQLNERIYSKRNHISELKVEIDNYKCYKVGTGTDKLIEQVEISDAKNKLAQVSKICESVRDYKLNLLNNWFVIQKLQDNFQIPFAIAFQPLISLKNFRVLPLAITNDSINIMWKYISFFSDILMIKLPYTNKICEQPMFEFSDSIQTVVQRLIKLIINILQICRHLKLVPSTPMDIPWLLDQYDVDGLFYNMVKRNKMKCRSVSLYWTFGMLYSMVLDNMNNPQRGHPARRTAPPPTVTGPHDRWYVVG</sequence>
<protein>
    <recommendedName>
        <fullName>Autophagy-related protein 14</fullName>
    </recommendedName>
    <alternativeName>
        <fullName>Cytoplasm to vacuole targeting protein 12</fullName>
    </alternativeName>
</protein>
<keyword id="KW-0072">Autophagy</keyword>
<keyword id="KW-0175">Coiled coil</keyword>
<keyword id="KW-0472">Membrane</keyword>
<keyword id="KW-0653">Protein transport</keyword>
<keyword id="KW-0813">Transport</keyword>
<keyword id="KW-0926">Vacuole</keyword>
<reference key="1">
    <citation type="journal article" date="2007" name="Proc. Natl. Acad. Sci. U.S.A.">
        <title>Genome sequencing and comparative analysis of Saccharomyces cerevisiae strain YJM789.</title>
        <authorList>
            <person name="Wei W."/>
            <person name="McCusker J.H."/>
            <person name="Hyman R.W."/>
            <person name="Jones T."/>
            <person name="Ning Y."/>
            <person name="Cao Z."/>
            <person name="Gu Z."/>
            <person name="Bruno D."/>
            <person name="Miranda M."/>
            <person name="Nguyen M."/>
            <person name="Wilhelmy J."/>
            <person name="Komp C."/>
            <person name="Tamse R."/>
            <person name="Wang X."/>
            <person name="Jia P."/>
            <person name="Luedi P."/>
            <person name="Oefner P.J."/>
            <person name="David L."/>
            <person name="Dietrich F.S."/>
            <person name="Li Y."/>
            <person name="Davis R.W."/>
            <person name="Steinmetz L.M."/>
        </authorList>
    </citation>
    <scope>NUCLEOTIDE SEQUENCE [LARGE SCALE GENOMIC DNA]</scope>
    <source>
        <strain>YJM789</strain>
    </source>
</reference>